<organism>
    <name type="scientific">Salmonella schwarzengrund (strain CVM19633)</name>
    <dbReference type="NCBI Taxonomy" id="439843"/>
    <lineage>
        <taxon>Bacteria</taxon>
        <taxon>Pseudomonadati</taxon>
        <taxon>Pseudomonadota</taxon>
        <taxon>Gammaproteobacteria</taxon>
        <taxon>Enterobacterales</taxon>
        <taxon>Enterobacteriaceae</taxon>
        <taxon>Salmonella</taxon>
    </lineage>
</organism>
<sequence length="428" mass="45449">MKTSLFKSLYFQVLTAIAIGILLGHYYPELGAQMKPLGDAFVKLIKMIIAPVIFCTVVTGIAGMESMKAVGRTGAVALLYFEIVSTIALIIGLIIVNVVQPGAGMNVDPATLDAQAVAVYAAQAKEQGIIAFLMDVIPGSVIGAFASGNILQVLLFAVLFGFALHRLGSKGQLIFNVIESFSQVIFGIINMIMRLAPIGAFGAMAFTIGKYGVGSLVQLGQLIICFYITCILFVVVVLGTIARVTGFSIFKFIRYIREELLIVLGTSSSESALPRMLDKMEKLGCRKSVVGLVIPTGYSFNLDGTSIYLTMAAVFIAQATNSHMDIFHQITLLVVLLLSSKGAAGVTGSGFIVLAATISAVGHLPVAGLALILGIDRFMSEARALTNLVGNGVATVVVAKWVKELDHQKLDDVLNNRAPDGKTHEISS</sequence>
<comment type="function">
    <text evidence="1">Responsible for the transport of dicarboxylates such as succinate, fumarate, and malate from the periplasm across the membrane.</text>
</comment>
<comment type="subcellular location">
    <subcellularLocation>
        <location evidence="1">Cell inner membrane</location>
        <topology evidence="1">Multi-pass membrane protein</topology>
    </subcellularLocation>
</comment>
<comment type="similarity">
    <text evidence="1">Belongs to the dicarboxylate/amino acid:cation symporter (DAACS) (TC 2.A.23) family.</text>
</comment>
<evidence type="ECO:0000255" key="1">
    <source>
        <dbReference type="HAMAP-Rule" id="MF_01300"/>
    </source>
</evidence>
<keyword id="KW-0997">Cell inner membrane</keyword>
<keyword id="KW-1003">Cell membrane</keyword>
<keyword id="KW-0472">Membrane</keyword>
<keyword id="KW-0769">Symport</keyword>
<keyword id="KW-0812">Transmembrane</keyword>
<keyword id="KW-1133">Transmembrane helix</keyword>
<keyword id="KW-0813">Transport</keyword>
<dbReference type="EMBL" id="CP001127">
    <property type="protein sequence ID" value="ACF90006.1"/>
    <property type="molecule type" value="Genomic_DNA"/>
</dbReference>
<dbReference type="RefSeq" id="WP_000858228.1">
    <property type="nucleotide sequence ID" value="NC_011094.1"/>
</dbReference>
<dbReference type="SMR" id="B4TZ13"/>
<dbReference type="KEGG" id="sew:SeSA_A3809"/>
<dbReference type="HOGENOM" id="CLU_019375_7_0_6"/>
<dbReference type="Proteomes" id="UP000001865">
    <property type="component" value="Chromosome"/>
</dbReference>
<dbReference type="GO" id="GO:0005886">
    <property type="term" value="C:plasma membrane"/>
    <property type="evidence" value="ECO:0007669"/>
    <property type="project" value="UniProtKB-SubCell"/>
</dbReference>
<dbReference type="GO" id="GO:0015138">
    <property type="term" value="F:fumarate transmembrane transporter activity"/>
    <property type="evidence" value="ECO:0007669"/>
    <property type="project" value="TreeGrafter"/>
</dbReference>
<dbReference type="GO" id="GO:0015366">
    <property type="term" value="F:malate:proton symporter activity"/>
    <property type="evidence" value="ECO:0007669"/>
    <property type="project" value="TreeGrafter"/>
</dbReference>
<dbReference type="GO" id="GO:0015141">
    <property type="term" value="F:succinate transmembrane transporter activity"/>
    <property type="evidence" value="ECO:0007669"/>
    <property type="project" value="TreeGrafter"/>
</dbReference>
<dbReference type="GO" id="GO:0070778">
    <property type="term" value="P:L-aspartate transmembrane transport"/>
    <property type="evidence" value="ECO:0007669"/>
    <property type="project" value="TreeGrafter"/>
</dbReference>
<dbReference type="FunFam" id="1.10.3860.10:FF:000001">
    <property type="entry name" value="C4-dicarboxylate transport protein"/>
    <property type="match status" value="1"/>
</dbReference>
<dbReference type="Gene3D" id="1.10.3860.10">
    <property type="entry name" value="Sodium:dicarboxylate symporter"/>
    <property type="match status" value="1"/>
</dbReference>
<dbReference type="HAMAP" id="MF_01300">
    <property type="entry name" value="C4_dicarb_transport"/>
    <property type="match status" value="1"/>
</dbReference>
<dbReference type="InterPro" id="IPR023954">
    <property type="entry name" value="C4_dicarb_transport"/>
</dbReference>
<dbReference type="InterPro" id="IPR001991">
    <property type="entry name" value="Na-dicarboxylate_symporter"/>
</dbReference>
<dbReference type="InterPro" id="IPR018107">
    <property type="entry name" value="Na-dicarboxylate_symporter_CS"/>
</dbReference>
<dbReference type="InterPro" id="IPR036458">
    <property type="entry name" value="Na:dicarbo_symporter_sf"/>
</dbReference>
<dbReference type="NCBIfam" id="NF002461">
    <property type="entry name" value="PRK01663.1"/>
    <property type="match status" value="1"/>
</dbReference>
<dbReference type="NCBIfam" id="NF009587">
    <property type="entry name" value="PRK13027.1"/>
    <property type="match status" value="1"/>
</dbReference>
<dbReference type="PANTHER" id="PTHR42865:SF1">
    <property type="entry name" value="AEROBIC C4-DICARBOXYLATE TRANSPORT PROTEIN"/>
    <property type="match status" value="1"/>
</dbReference>
<dbReference type="PANTHER" id="PTHR42865">
    <property type="entry name" value="PROTON/GLUTAMATE-ASPARTATE SYMPORTER"/>
    <property type="match status" value="1"/>
</dbReference>
<dbReference type="Pfam" id="PF00375">
    <property type="entry name" value="SDF"/>
    <property type="match status" value="1"/>
</dbReference>
<dbReference type="PRINTS" id="PR00173">
    <property type="entry name" value="EDTRNSPORT"/>
</dbReference>
<dbReference type="SUPFAM" id="SSF118215">
    <property type="entry name" value="Proton glutamate symport protein"/>
    <property type="match status" value="1"/>
</dbReference>
<dbReference type="PROSITE" id="PS00713">
    <property type="entry name" value="NA_DICARBOXYL_SYMP_1"/>
    <property type="match status" value="1"/>
</dbReference>
<dbReference type="PROSITE" id="PS00714">
    <property type="entry name" value="NA_DICARBOXYL_SYMP_2"/>
    <property type="match status" value="1"/>
</dbReference>
<protein>
    <recommendedName>
        <fullName evidence="1">C4-dicarboxylate transport protein</fullName>
    </recommendedName>
</protein>
<name>DCTA_SALSV</name>
<reference key="1">
    <citation type="journal article" date="2011" name="J. Bacteriol.">
        <title>Comparative genomics of 28 Salmonella enterica isolates: evidence for CRISPR-mediated adaptive sublineage evolution.</title>
        <authorList>
            <person name="Fricke W.F."/>
            <person name="Mammel M.K."/>
            <person name="McDermott P.F."/>
            <person name="Tartera C."/>
            <person name="White D.G."/>
            <person name="Leclerc J.E."/>
            <person name="Ravel J."/>
            <person name="Cebula T.A."/>
        </authorList>
    </citation>
    <scope>NUCLEOTIDE SEQUENCE [LARGE SCALE GENOMIC DNA]</scope>
    <source>
        <strain>CVM19633</strain>
    </source>
</reference>
<accession>B4TZ13</accession>
<gene>
    <name evidence="1" type="primary">dctA</name>
    <name type="ordered locus">SeSA_A3809</name>
</gene>
<proteinExistence type="inferred from homology"/>
<feature type="chain" id="PRO_1000140470" description="C4-dicarboxylate transport protein">
    <location>
        <begin position="1"/>
        <end position="428"/>
    </location>
</feature>
<feature type="transmembrane region" description="Helical" evidence="1">
    <location>
        <begin position="4"/>
        <end position="24"/>
    </location>
</feature>
<feature type="transmembrane region" description="Helical" evidence="1">
    <location>
        <begin position="44"/>
        <end position="64"/>
    </location>
</feature>
<feature type="transmembrane region" description="Helical" evidence="1">
    <location>
        <begin position="76"/>
        <end position="96"/>
    </location>
</feature>
<feature type="transmembrane region" description="Helical" evidence="1">
    <location>
        <begin position="142"/>
        <end position="162"/>
    </location>
</feature>
<feature type="transmembrane region" description="Helical" evidence="1">
    <location>
        <begin position="184"/>
        <end position="204"/>
    </location>
</feature>
<feature type="transmembrane region" description="Helical" evidence="1">
    <location>
        <begin position="222"/>
        <end position="242"/>
    </location>
</feature>
<feature type="transmembrane region" description="Helical" evidence="1">
    <location>
        <begin position="289"/>
        <end position="309"/>
    </location>
</feature>
<feature type="transmembrane region" description="Helical" evidence="1">
    <location>
        <begin position="326"/>
        <end position="346"/>
    </location>
</feature>
<feature type="transmembrane region" description="Helical" evidence="1">
    <location>
        <begin position="352"/>
        <end position="372"/>
    </location>
</feature>